<organism evidence="4">
    <name type="scientific">Pseudomonas sp. (strain ADP)</name>
    <dbReference type="NCBI Taxonomy" id="47660"/>
    <lineage>
        <taxon>Bacteria</taxon>
        <taxon>Pseudomonadati</taxon>
        <taxon>Pseudomonadota</taxon>
        <taxon>Gammaproteobacteria</taxon>
        <taxon>Pseudomonadales</taxon>
        <taxon>Pseudomonadaceae</taxon>
        <taxon>Pseudomonas</taxon>
    </lineage>
</organism>
<proteinExistence type="evidence at protein level"/>
<feature type="chain" id="PRO_0000447020" description="1-carboxybiuret hydrolase subunit AtzG">
    <location>
        <begin position="1"/>
        <end position="68"/>
    </location>
</feature>
<feature type="helix" evidence="5">
    <location>
        <begin position="3"/>
        <end position="17"/>
    </location>
</feature>
<feature type="helix" evidence="5">
    <location>
        <begin position="23"/>
        <end position="44"/>
    </location>
</feature>
<comment type="function">
    <text evidence="1">Important for the activity of the AtzE subunit of 1-carboxybiuret hydrolase.</text>
</comment>
<comment type="pathway">
    <text evidence="3">Xenobiotic degradation; atrazine degradation.</text>
</comment>
<comment type="subunit">
    <text evidence="1">Heterotetramer consisting of 2 AtzE and 2 AtzG subunits.</text>
</comment>
<gene>
    <name evidence="2" type="primary">atzG</name>
</gene>
<reference key="1">
    <citation type="journal article" date="2001" name="J. Bacteriol.">
        <title>Complete nucleotide sequence and organization of the atrazine catabolic plasmid pADP-1 from Pseudomonas sp. strain ADP.</title>
        <authorList>
            <person name="Martinez B."/>
            <person name="Tomkins J."/>
            <person name="Wackett L.P."/>
            <person name="Wing R."/>
            <person name="Sadowsky M.J."/>
        </authorList>
    </citation>
    <scope>NUCLEOTIDE SEQUENCE [GENOMIC DNA]</scope>
    <source>
        <strain>ADP</strain>
    </source>
</reference>
<reference key="2">
    <citation type="journal article" date="2018" name="J. Biol. Chem.">
        <title>An unexpected vestigial protein complex reveals the evolutionary origins of an s-triazine catabolic enzyme.</title>
        <authorList>
            <person name="Esquirol L."/>
            <person name="Peat T.S."/>
            <person name="Wilding M."/>
            <person name="Liu J.W."/>
            <person name="French N.G."/>
            <person name="Hartley C.J."/>
            <person name="Onagi H."/>
            <person name="Nebl T."/>
            <person name="Easton C.J."/>
            <person name="Newman J."/>
            <person name="Scott C."/>
        </authorList>
    </citation>
    <scope>X-RAY CRYSTALLOGRAPHY (1.95 ANGSTROMS) IN COMPLEX WITH ATZE</scope>
    <scope>FUNCTION</scope>
    <scope>SUBUNIT</scope>
    <scope>IDENTIFICATION BY MASS SPECTROMETRY</scope>
</reference>
<keyword id="KW-0002">3D-structure</keyword>
<keyword id="KW-0614">Plasmid</keyword>
<accession>A0A384E126</accession>
<evidence type="ECO:0000269" key="1">
    <source>
    </source>
</evidence>
<evidence type="ECO:0000303" key="2">
    <source>
    </source>
</evidence>
<evidence type="ECO:0000305" key="3">
    <source>
    </source>
</evidence>
<evidence type="ECO:0000312" key="4">
    <source>
        <dbReference type="PDB" id="6C62"/>
    </source>
</evidence>
<evidence type="ECO:0007829" key="5">
    <source>
        <dbReference type="PDB" id="6C62"/>
    </source>
</evidence>
<sequence>MTETEIFAYIEAASIAIGIPLEPARARAVAHHFSRTALLAEMLESVPLSPESELAEIYRPAPFPAEDI</sequence>
<geneLocation type="plasmid">
    <name>pADP-1</name>
</geneLocation>
<protein>
    <recommendedName>
        <fullName evidence="2">1-carboxybiuret hydrolase subunit AtzG</fullName>
    </recommendedName>
</protein>
<name>ATZG_PSESD</name>
<dbReference type="EMBL" id="U66917">
    <property type="status" value="NOT_ANNOTATED_CDS"/>
    <property type="molecule type" value="Genomic_DNA"/>
</dbReference>
<dbReference type="PDB" id="6C62">
    <property type="method" value="X-ray"/>
    <property type="resolution" value="1.95 A"/>
    <property type="chains" value="C/D=1-68"/>
</dbReference>
<dbReference type="PDB" id="6C6G">
    <property type="method" value="X-ray"/>
    <property type="resolution" value="2.10 A"/>
    <property type="chains" value="C/D=1-68"/>
</dbReference>
<dbReference type="PDBsum" id="6C62"/>
<dbReference type="PDBsum" id="6C6G"/>
<dbReference type="SMR" id="A0A384E126"/>
<dbReference type="BRENDA" id="3.5.1.131">
    <property type="organism ID" value="14885"/>
</dbReference>
<dbReference type="SABIO-RK" id="A0A384E126"/>
<dbReference type="UniPathway" id="UPA00008"/>
<dbReference type="GO" id="GO:0019381">
    <property type="term" value="P:atrazine catabolic process"/>
    <property type="evidence" value="ECO:0007669"/>
    <property type="project" value="UniProtKB-UniPathway"/>
</dbReference>
<dbReference type="InterPro" id="IPR025148">
    <property type="entry name" value="AtzG-like"/>
</dbReference>
<dbReference type="Pfam" id="PF13318">
    <property type="entry name" value="AtzG-like"/>
    <property type="match status" value="1"/>
</dbReference>